<keyword id="KW-0997">Cell inner membrane</keyword>
<keyword id="KW-1003">Cell membrane</keyword>
<keyword id="KW-0143">Chaperone</keyword>
<keyword id="KW-1015">Disulfide bond</keyword>
<keyword id="KW-0249">Electron transport</keyword>
<keyword id="KW-0472">Membrane</keyword>
<keyword id="KW-0560">Oxidoreductase</keyword>
<keyword id="KW-0676">Redox-active center</keyword>
<keyword id="KW-0812">Transmembrane</keyword>
<keyword id="KW-1133">Transmembrane helix</keyword>
<keyword id="KW-0813">Transport</keyword>
<accession>A1TQ84</accession>
<proteinExistence type="inferred from homology"/>
<evidence type="ECO:0000255" key="1">
    <source>
        <dbReference type="HAMAP-Rule" id="MF_00286"/>
    </source>
</evidence>
<organism>
    <name type="scientific">Paracidovorax citrulli (strain AAC00-1)</name>
    <name type="common">Acidovorax citrulli</name>
    <dbReference type="NCBI Taxonomy" id="397945"/>
    <lineage>
        <taxon>Bacteria</taxon>
        <taxon>Pseudomonadati</taxon>
        <taxon>Pseudomonadota</taxon>
        <taxon>Betaproteobacteria</taxon>
        <taxon>Burkholderiales</taxon>
        <taxon>Comamonadaceae</taxon>
        <taxon>Paracidovorax</taxon>
    </lineage>
</organism>
<comment type="function">
    <text evidence="1">Required for disulfide bond formation in some periplasmic proteins. Acts by oxidizing the DsbA protein.</text>
</comment>
<comment type="subcellular location">
    <subcellularLocation>
        <location evidence="1">Cell inner membrane</location>
        <topology evidence="1">Multi-pass membrane protein</topology>
    </subcellularLocation>
</comment>
<comment type="similarity">
    <text evidence="1">Belongs to the DsbB family.</text>
</comment>
<gene>
    <name evidence="1" type="primary">dsbB</name>
    <name type="ordered locus">Aave_2549</name>
</gene>
<dbReference type="EMBL" id="CP000512">
    <property type="protein sequence ID" value="ABM33122.1"/>
    <property type="molecule type" value="Genomic_DNA"/>
</dbReference>
<dbReference type="RefSeq" id="WP_011795648.1">
    <property type="nucleotide sequence ID" value="NC_008752.1"/>
</dbReference>
<dbReference type="SMR" id="A1TQ84"/>
<dbReference type="STRING" id="397945.Aave_2549"/>
<dbReference type="GeneID" id="79792135"/>
<dbReference type="KEGG" id="aav:Aave_2549"/>
<dbReference type="eggNOG" id="COG1495">
    <property type="taxonomic scope" value="Bacteria"/>
</dbReference>
<dbReference type="HOGENOM" id="CLU_098660_1_0_4"/>
<dbReference type="OrthoDB" id="3711263at2"/>
<dbReference type="Proteomes" id="UP000002596">
    <property type="component" value="Chromosome"/>
</dbReference>
<dbReference type="GO" id="GO:0005886">
    <property type="term" value="C:plasma membrane"/>
    <property type="evidence" value="ECO:0007669"/>
    <property type="project" value="UniProtKB-SubCell"/>
</dbReference>
<dbReference type="GO" id="GO:0009055">
    <property type="term" value="F:electron transfer activity"/>
    <property type="evidence" value="ECO:0007669"/>
    <property type="project" value="UniProtKB-UniRule"/>
</dbReference>
<dbReference type="GO" id="GO:0015035">
    <property type="term" value="F:protein-disulfide reductase activity"/>
    <property type="evidence" value="ECO:0007669"/>
    <property type="project" value="UniProtKB-UniRule"/>
</dbReference>
<dbReference type="GO" id="GO:0006457">
    <property type="term" value="P:protein folding"/>
    <property type="evidence" value="ECO:0007669"/>
    <property type="project" value="InterPro"/>
</dbReference>
<dbReference type="Gene3D" id="1.20.1550.10">
    <property type="entry name" value="DsbB-like"/>
    <property type="match status" value="1"/>
</dbReference>
<dbReference type="HAMAP" id="MF_00286">
    <property type="entry name" value="DsbB"/>
    <property type="match status" value="1"/>
</dbReference>
<dbReference type="InterPro" id="IPR003752">
    <property type="entry name" value="DiS_bond_form_DsbB/BdbC"/>
</dbReference>
<dbReference type="InterPro" id="IPR022920">
    <property type="entry name" value="Disulphide_bond_form_DsbB"/>
</dbReference>
<dbReference type="InterPro" id="IPR050183">
    <property type="entry name" value="DsbB"/>
</dbReference>
<dbReference type="InterPro" id="IPR023380">
    <property type="entry name" value="DsbB-like_sf"/>
</dbReference>
<dbReference type="PANTHER" id="PTHR36570">
    <property type="entry name" value="DISULFIDE BOND FORMATION PROTEIN B"/>
    <property type="match status" value="1"/>
</dbReference>
<dbReference type="PANTHER" id="PTHR36570:SF3">
    <property type="entry name" value="DISULFIDE BOND FORMATION PROTEIN B"/>
    <property type="match status" value="1"/>
</dbReference>
<dbReference type="Pfam" id="PF02600">
    <property type="entry name" value="DsbB"/>
    <property type="match status" value="1"/>
</dbReference>
<dbReference type="SUPFAM" id="SSF158442">
    <property type="entry name" value="DsbB-like"/>
    <property type="match status" value="1"/>
</dbReference>
<sequence length="175" mass="19057">MVSNWLDAAPRRVLALISAACIAMLAFGMYLQHVVGLEPCPMCIVQRYALIGVAVFTGLGSLRGGRGWWMTWGVLALLLSGFGAFVAARQSWLQWYPPEIATCGRDFYGMIENFPISRAIPMIFRGSGDCAAIDWTFLGGSIANWSFVCFVVMALVLLVMLLRAPRPARGGFSAA</sequence>
<reference key="1">
    <citation type="submission" date="2006-12" db="EMBL/GenBank/DDBJ databases">
        <title>Complete sequence of Acidovorax avenae subsp. citrulli AAC00-1.</title>
        <authorList>
            <person name="Copeland A."/>
            <person name="Lucas S."/>
            <person name="Lapidus A."/>
            <person name="Barry K."/>
            <person name="Detter J.C."/>
            <person name="Glavina del Rio T."/>
            <person name="Dalin E."/>
            <person name="Tice H."/>
            <person name="Pitluck S."/>
            <person name="Kiss H."/>
            <person name="Brettin T."/>
            <person name="Bruce D."/>
            <person name="Han C."/>
            <person name="Tapia R."/>
            <person name="Gilna P."/>
            <person name="Schmutz J."/>
            <person name="Larimer F."/>
            <person name="Land M."/>
            <person name="Hauser L."/>
            <person name="Kyrpides N."/>
            <person name="Kim E."/>
            <person name="Stahl D."/>
            <person name="Richardson P."/>
        </authorList>
    </citation>
    <scope>NUCLEOTIDE SEQUENCE [LARGE SCALE GENOMIC DNA]</scope>
    <source>
        <strain>AAC00-1</strain>
    </source>
</reference>
<protein>
    <recommendedName>
        <fullName evidence="1">Disulfide bond formation protein B</fullName>
    </recommendedName>
    <alternativeName>
        <fullName evidence="1">Disulfide oxidoreductase</fullName>
    </alternativeName>
</protein>
<name>DSBB_PARC0</name>
<feature type="chain" id="PRO_0000298329" description="Disulfide bond formation protein B">
    <location>
        <begin position="1"/>
        <end position="175"/>
    </location>
</feature>
<feature type="topological domain" description="Cytoplasmic" evidence="1">
    <location>
        <begin position="1"/>
        <end position="13"/>
    </location>
</feature>
<feature type="transmembrane region" description="Helical" evidence="1">
    <location>
        <begin position="14"/>
        <end position="30"/>
    </location>
</feature>
<feature type="topological domain" description="Periplasmic" evidence="1">
    <location>
        <begin position="31"/>
        <end position="48"/>
    </location>
</feature>
<feature type="transmembrane region" description="Helical" evidence="1">
    <location>
        <begin position="49"/>
        <end position="65"/>
    </location>
</feature>
<feature type="topological domain" description="Cytoplasmic" evidence="1">
    <location>
        <begin position="66"/>
        <end position="70"/>
    </location>
</feature>
<feature type="transmembrane region" description="Helical" evidence="1">
    <location>
        <begin position="71"/>
        <end position="88"/>
    </location>
</feature>
<feature type="topological domain" description="Periplasmic" evidence="1">
    <location>
        <begin position="89"/>
        <end position="144"/>
    </location>
</feature>
<feature type="transmembrane region" description="Helical" evidence="1">
    <location>
        <begin position="145"/>
        <end position="163"/>
    </location>
</feature>
<feature type="topological domain" description="Cytoplasmic" evidence="1">
    <location>
        <begin position="164"/>
        <end position="175"/>
    </location>
</feature>
<feature type="disulfide bond" description="Redox-active" evidence="1">
    <location>
        <begin position="40"/>
        <end position="43"/>
    </location>
</feature>
<feature type="disulfide bond" description="Redox-active" evidence="1">
    <location>
        <begin position="103"/>
        <end position="130"/>
    </location>
</feature>